<comment type="function">
    <text evidence="1">NDH-1 shuttles electrons from NADH, via FMN and iron-sulfur (Fe-S) centers, to quinones in the respiratory chain. The immediate electron acceptor for the enzyme in this species is believed to be ubiquinone. Couples the redox reaction to proton translocation (for every two electrons transferred, four hydrogen ions are translocated across the cytoplasmic membrane), and thus conserves the redox energy in a proton gradient. This subunit may bind ubiquinone.</text>
</comment>
<comment type="catalytic activity">
    <reaction evidence="1">
        <text>a quinone + NADH + 5 H(+)(in) = a quinol + NAD(+) + 4 H(+)(out)</text>
        <dbReference type="Rhea" id="RHEA:57888"/>
        <dbReference type="ChEBI" id="CHEBI:15378"/>
        <dbReference type="ChEBI" id="CHEBI:24646"/>
        <dbReference type="ChEBI" id="CHEBI:57540"/>
        <dbReference type="ChEBI" id="CHEBI:57945"/>
        <dbReference type="ChEBI" id="CHEBI:132124"/>
    </reaction>
</comment>
<comment type="subunit">
    <text evidence="1">NDH-1 is composed of 13 different subunits. Subunits NuoA, H, J, K, L, M, N constitute the membrane sector of the complex.</text>
</comment>
<comment type="subcellular location">
    <subcellularLocation>
        <location evidence="1">Cell membrane</location>
        <topology evidence="1">Multi-pass membrane protein</topology>
    </subcellularLocation>
</comment>
<comment type="similarity">
    <text evidence="1">Belongs to the complex I subunit 1 family.</text>
</comment>
<proteinExistence type="inferred from homology"/>
<evidence type="ECO:0000255" key="1">
    <source>
        <dbReference type="HAMAP-Rule" id="MF_01350"/>
    </source>
</evidence>
<keyword id="KW-1003">Cell membrane</keyword>
<keyword id="KW-0472">Membrane</keyword>
<keyword id="KW-0520">NAD</keyword>
<keyword id="KW-0874">Quinone</keyword>
<keyword id="KW-1278">Translocase</keyword>
<keyword id="KW-0812">Transmembrane</keyword>
<keyword id="KW-1133">Transmembrane helix</keyword>
<keyword id="KW-0830">Ubiquinone</keyword>
<dbReference type="EC" id="7.1.1.-" evidence="1"/>
<dbReference type="EMBL" id="CP001161">
    <property type="protein sequence ID" value="ACL30533.1"/>
    <property type="molecule type" value="Genomic_DNA"/>
</dbReference>
<dbReference type="RefSeq" id="WP_009874116.1">
    <property type="nucleotide sequence ID" value="NC_011833.1"/>
</dbReference>
<dbReference type="SMR" id="B8D8W1"/>
<dbReference type="KEGG" id="bap:BUAP5A_158"/>
<dbReference type="HOGENOM" id="CLU_015134_0_1_6"/>
<dbReference type="OrthoDB" id="9803734at2"/>
<dbReference type="Proteomes" id="UP000006904">
    <property type="component" value="Chromosome"/>
</dbReference>
<dbReference type="GO" id="GO:0005886">
    <property type="term" value="C:plasma membrane"/>
    <property type="evidence" value="ECO:0007669"/>
    <property type="project" value="UniProtKB-SubCell"/>
</dbReference>
<dbReference type="GO" id="GO:0003954">
    <property type="term" value="F:NADH dehydrogenase activity"/>
    <property type="evidence" value="ECO:0007669"/>
    <property type="project" value="TreeGrafter"/>
</dbReference>
<dbReference type="GO" id="GO:0016655">
    <property type="term" value="F:oxidoreductase activity, acting on NAD(P)H, quinone or similar compound as acceptor"/>
    <property type="evidence" value="ECO:0007669"/>
    <property type="project" value="UniProtKB-UniRule"/>
</dbReference>
<dbReference type="GO" id="GO:0048038">
    <property type="term" value="F:quinone binding"/>
    <property type="evidence" value="ECO:0007669"/>
    <property type="project" value="UniProtKB-KW"/>
</dbReference>
<dbReference type="GO" id="GO:0009060">
    <property type="term" value="P:aerobic respiration"/>
    <property type="evidence" value="ECO:0007669"/>
    <property type="project" value="TreeGrafter"/>
</dbReference>
<dbReference type="HAMAP" id="MF_01350">
    <property type="entry name" value="NDH1_NuoH"/>
    <property type="match status" value="1"/>
</dbReference>
<dbReference type="InterPro" id="IPR001694">
    <property type="entry name" value="NADH_UbQ_OxRdtase_su1/FPO"/>
</dbReference>
<dbReference type="InterPro" id="IPR018086">
    <property type="entry name" value="NADH_UbQ_OxRdtase_su1_CS"/>
</dbReference>
<dbReference type="NCBIfam" id="NF004740">
    <property type="entry name" value="PRK06076.1-1"/>
    <property type="match status" value="1"/>
</dbReference>
<dbReference type="NCBIfam" id="NF004741">
    <property type="entry name" value="PRK06076.1-2"/>
    <property type="match status" value="1"/>
</dbReference>
<dbReference type="PANTHER" id="PTHR11432">
    <property type="entry name" value="NADH DEHYDROGENASE SUBUNIT 1"/>
    <property type="match status" value="1"/>
</dbReference>
<dbReference type="PANTHER" id="PTHR11432:SF3">
    <property type="entry name" value="NADH-UBIQUINONE OXIDOREDUCTASE CHAIN 1"/>
    <property type="match status" value="1"/>
</dbReference>
<dbReference type="Pfam" id="PF00146">
    <property type="entry name" value="NADHdh"/>
    <property type="match status" value="1"/>
</dbReference>
<dbReference type="PROSITE" id="PS00667">
    <property type="entry name" value="COMPLEX1_ND1_1"/>
    <property type="match status" value="1"/>
</dbReference>
<dbReference type="PROSITE" id="PS00668">
    <property type="entry name" value="COMPLEX1_ND1_2"/>
    <property type="match status" value="1"/>
</dbReference>
<protein>
    <recommendedName>
        <fullName evidence="1">NADH-quinone oxidoreductase subunit H</fullName>
        <ecNumber evidence="1">7.1.1.-</ecNumber>
    </recommendedName>
    <alternativeName>
        <fullName evidence="1">NADH dehydrogenase I subunit H</fullName>
    </alternativeName>
    <alternativeName>
        <fullName evidence="1">NDH-1 subunit H</fullName>
    </alternativeName>
</protein>
<sequence>MIWLEENMIKITFCFFKVIFILLLIVFSSAMLSIVERRLLAVFQNRYGPNRVGWMGSLQLCADMIKILFKEDWIPPFSRKFIFVLSPVIAFTSLLCVIPIIPFTSHFVIIDLNIGILFFLMMASLSVYAILFAGWSSNNKYALLGAMRACVQTLSYEVFLGLSLMGVVAQSGSFKISDIVNSQKYIWNVFPQFFGFLTFLIAGLAVCHRHPFDQPESEQELADGYHIEYSGMKFGLFFIGEYISIITVSSLIVTLFFGGWLGPWIPGCIWFILKIIFFIFLFILIRAALPRPRYDQVLLFGWKFCLPLTLFNLFLTAFLILV</sequence>
<reference key="1">
    <citation type="journal article" date="2009" name="Science">
        <title>The dynamics and time scale of ongoing genomic erosion in symbiotic bacteria.</title>
        <authorList>
            <person name="Moran N.A."/>
            <person name="McLaughlin H.J."/>
            <person name="Sorek R."/>
        </authorList>
    </citation>
    <scope>NUCLEOTIDE SEQUENCE [LARGE SCALE GENOMIC DNA]</scope>
    <source>
        <strain>5A</strain>
    </source>
</reference>
<name>NUOH_BUCA5</name>
<feature type="chain" id="PRO_1000166623" description="NADH-quinone oxidoreductase subunit H">
    <location>
        <begin position="1"/>
        <end position="322"/>
    </location>
</feature>
<feature type="transmembrane region" description="Helical" evidence="1">
    <location>
        <begin position="15"/>
        <end position="35"/>
    </location>
</feature>
<feature type="transmembrane region" description="Helical" evidence="1">
    <location>
        <begin position="50"/>
        <end position="69"/>
    </location>
</feature>
<feature type="transmembrane region" description="Helical" evidence="1">
    <location>
        <begin position="81"/>
        <end position="101"/>
    </location>
</feature>
<feature type="transmembrane region" description="Helical" evidence="1">
    <location>
        <begin position="114"/>
        <end position="134"/>
    </location>
</feature>
<feature type="transmembrane region" description="Helical" evidence="1">
    <location>
        <begin position="149"/>
        <end position="169"/>
    </location>
</feature>
<feature type="transmembrane region" description="Helical" evidence="1">
    <location>
        <begin position="186"/>
        <end position="206"/>
    </location>
</feature>
<feature type="transmembrane region" description="Helical" evidence="1">
    <location>
        <begin position="237"/>
        <end position="257"/>
    </location>
</feature>
<feature type="transmembrane region" description="Helical" evidence="1">
    <location>
        <begin position="265"/>
        <end position="285"/>
    </location>
</feature>
<feature type="transmembrane region" description="Helical" evidence="1">
    <location>
        <begin position="302"/>
        <end position="322"/>
    </location>
</feature>
<accession>B8D8W1</accession>
<organism>
    <name type="scientific">Buchnera aphidicola subsp. Acyrthosiphon pisum (strain 5A)</name>
    <dbReference type="NCBI Taxonomy" id="563178"/>
    <lineage>
        <taxon>Bacteria</taxon>
        <taxon>Pseudomonadati</taxon>
        <taxon>Pseudomonadota</taxon>
        <taxon>Gammaproteobacteria</taxon>
        <taxon>Enterobacterales</taxon>
        <taxon>Erwiniaceae</taxon>
        <taxon>Buchnera</taxon>
    </lineage>
</organism>
<gene>
    <name evidence="1" type="primary">nuoH</name>
    <name type="ordered locus">BUAP5A_158</name>
</gene>